<sequence length="58" mass="6638">MKTIKVTQIKSASHRLKNHKLCLQGLGLRRIGHTVEVQDTPSNRGMINKVYYMVSVEE</sequence>
<accession>Q6F7T0</accession>
<comment type="subunit">
    <text evidence="1">Part of the 50S ribosomal subunit.</text>
</comment>
<comment type="similarity">
    <text evidence="1">Belongs to the universal ribosomal protein uL30 family.</text>
</comment>
<evidence type="ECO:0000255" key="1">
    <source>
        <dbReference type="HAMAP-Rule" id="MF_01371"/>
    </source>
</evidence>
<evidence type="ECO:0000305" key="2"/>
<proteinExistence type="inferred from homology"/>
<feature type="chain" id="PRO_0000273736" description="Large ribosomal subunit protein uL30">
    <location>
        <begin position="1"/>
        <end position="58"/>
    </location>
</feature>
<organism>
    <name type="scientific">Acinetobacter baylyi (strain ATCC 33305 / BD413 / ADP1)</name>
    <dbReference type="NCBI Taxonomy" id="62977"/>
    <lineage>
        <taxon>Bacteria</taxon>
        <taxon>Pseudomonadati</taxon>
        <taxon>Pseudomonadota</taxon>
        <taxon>Gammaproteobacteria</taxon>
        <taxon>Moraxellales</taxon>
        <taxon>Moraxellaceae</taxon>
        <taxon>Acinetobacter</taxon>
    </lineage>
</organism>
<keyword id="KW-0687">Ribonucleoprotein</keyword>
<keyword id="KW-0689">Ribosomal protein</keyword>
<gene>
    <name evidence="1" type="primary">rpmD</name>
    <name type="ordered locus">ACIAD3201</name>
</gene>
<reference key="1">
    <citation type="journal article" date="2004" name="Nucleic Acids Res.">
        <title>Unique features revealed by the genome sequence of Acinetobacter sp. ADP1, a versatile and naturally transformation competent bacterium.</title>
        <authorList>
            <person name="Barbe V."/>
            <person name="Vallenet D."/>
            <person name="Fonknechten N."/>
            <person name="Kreimeyer A."/>
            <person name="Oztas S."/>
            <person name="Labarre L."/>
            <person name="Cruveiller S."/>
            <person name="Robert C."/>
            <person name="Duprat S."/>
            <person name="Wincker P."/>
            <person name="Ornston L.N."/>
            <person name="Weissenbach J."/>
            <person name="Marliere P."/>
            <person name="Cohen G.N."/>
            <person name="Medigue C."/>
        </authorList>
    </citation>
    <scope>NUCLEOTIDE SEQUENCE [LARGE SCALE GENOMIC DNA]</scope>
    <source>
        <strain>ATCC 33305 / BD413 / ADP1</strain>
    </source>
</reference>
<dbReference type="EMBL" id="CR543861">
    <property type="protein sequence ID" value="CAG69885.1"/>
    <property type="molecule type" value="Genomic_DNA"/>
</dbReference>
<dbReference type="RefSeq" id="WP_004924142.1">
    <property type="nucleotide sequence ID" value="NC_005966.1"/>
</dbReference>
<dbReference type="SMR" id="Q6F7T0"/>
<dbReference type="STRING" id="202950.GCA_001485005_02954"/>
<dbReference type="GeneID" id="67513069"/>
<dbReference type="KEGG" id="aci:ACIAD3201"/>
<dbReference type="eggNOG" id="COG1841">
    <property type="taxonomic scope" value="Bacteria"/>
</dbReference>
<dbReference type="HOGENOM" id="CLU_131047_1_4_6"/>
<dbReference type="OrthoDB" id="9812790at2"/>
<dbReference type="BioCyc" id="ASP62977:ACIAD_RS14505-MONOMER"/>
<dbReference type="Proteomes" id="UP000000430">
    <property type="component" value="Chromosome"/>
</dbReference>
<dbReference type="GO" id="GO:0022625">
    <property type="term" value="C:cytosolic large ribosomal subunit"/>
    <property type="evidence" value="ECO:0007669"/>
    <property type="project" value="TreeGrafter"/>
</dbReference>
<dbReference type="GO" id="GO:0003735">
    <property type="term" value="F:structural constituent of ribosome"/>
    <property type="evidence" value="ECO:0007669"/>
    <property type="project" value="InterPro"/>
</dbReference>
<dbReference type="GO" id="GO:0006412">
    <property type="term" value="P:translation"/>
    <property type="evidence" value="ECO:0007669"/>
    <property type="project" value="UniProtKB-UniRule"/>
</dbReference>
<dbReference type="CDD" id="cd01658">
    <property type="entry name" value="Ribosomal_L30"/>
    <property type="match status" value="1"/>
</dbReference>
<dbReference type="FunFam" id="3.30.1390.20:FF:000001">
    <property type="entry name" value="50S ribosomal protein L30"/>
    <property type="match status" value="1"/>
</dbReference>
<dbReference type="Gene3D" id="3.30.1390.20">
    <property type="entry name" value="Ribosomal protein L30, ferredoxin-like fold domain"/>
    <property type="match status" value="1"/>
</dbReference>
<dbReference type="HAMAP" id="MF_01371_B">
    <property type="entry name" value="Ribosomal_uL30_B"/>
    <property type="match status" value="1"/>
</dbReference>
<dbReference type="InterPro" id="IPR036919">
    <property type="entry name" value="Ribo_uL30_ferredoxin-like_sf"/>
</dbReference>
<dbReference type="InterPro" id="IPR005996">
    <property type="entry name" value="Ribosomal_uL30_bac-type"/>
</dbReference>
<dbReference type="InterPro" id="IPR016082">
    <property type="entry name" value="Ribosomal_uL30_ferredoxin-like"/>
</dbReference>
<dbReference type="NCBIfam" id="TIGR01308">
    <property type="entry name" value="rpmD_bact"/>
    <property type="match status" value="1"/>
</dbReference>
<dbReference type="PANTHER" id="PTHR15892:SF2">
    <property type="entry name" value="LARGE RIBOSOMAL SUBUNIT PROTEIN UL30M"/>
    <property type="match status" value="1"/>
</dbReference>
<dbReference type="PANTHER" id="PTHR15892">
    <property type="entry name" value="MITOCHONDRIAL RIBOSOMAL PROTEIN L30"/>
    <property type="match status" value="1"/>
</dbReference>
<dbReference type="Pfam" id="PF00327">
    <property type="entry name" value="Ribosomal_L30"/>
    <property type="match status" value="1"/>
</dbReference>
<dbReference type="PIRSF" id="PIRSF002211">
    <property type="entry name" value="Ribosomal_L30_bac-type"/>
    <property type="match status" value="1"/>
</dbReference>
<dbReference type="SUPFAM" id="SSF55129">
    <property type="entry name" value="Ribosomal protein L30p/L7e"/>
    <property type="match status" value="1"/>
</dbReference>
<protein>
    <recommendedName>
        <fullName evidence="1">Large ribosomal subunit protein uL30</fullName>
    </recommendedName>
    <alternativeName>
        <fullName evidence="2">50S ribosomal protein L30</fullName>
    </alternativeName>
</protein>
<name>RL30_ACIAD</name>